<proteinExistence type="inferred from homology"/>
<comment type="function">
    <text evidence="1">Nitric oxide-responsive transcriptional regulator.</text>
</comment>
<comment type="cofactor">
    <cofactor evidence="3">
        <name>[2Fe-2S] cluster</name>
        <dbReference type="ChEBI" id="CHEBI:190135"/>
    </cofactor>
    <text evidence="3">Binds 1 [2Fe-2S] cluster per subunit.</text>
</comment>
<protein>
    <recommendedName>
        <fullName>HTH-type transcriptional regulator NsrR</fullName>
    </recommendedName>
</protein>
<feature type="chain" id="PRO_0000271133" description="HTH-type transcriptional regulator NsrR">
    <location>
        <begin position="1"/>
        <end position="143"/>
    </location>
</feature>
<feature type="domain" description="HTH rrf2-type" evidence="2">
    <location>
        <begin position="2"/>
        <end position="133"/>
    </location>
</feature>
<feature type="DNA-binding region" description="H-T-H motif" evidence="2">
    <location>
        <begin position="28"/>
        <end position="51"/>
    </location>
</feature>
<feature type="binding site" evidence="2">
    <location>
        <position position="92"/>
    </location>
    <ligand>
        <name>[2Fe-2S] cluster</name>
        <dbReference type="ChEBI" id="CHEBI:190135"/>
    </ligand>
</feature>
<feature type="binding site" evidence="2">
    <location>
        <position position="100"/>
    </location>
    <ligand>
        <name>[2Fe-2S] cluster</name>
        <dbReference type="ChEBI" id="CHEBI:190135"/>
    </ligand>
</feature>
<feature type="binding site" evidence="2">
    <location>
        <position position="106"/>
    </location>
    <ligand>
        <name>[2Fe-2S] cluster</name>
        <dbReference type="ChEBI" id="CHEBI:190135"/>
    </ligand>
</feature>
<keyword id="KW-0001">2Fe-2S</keyword>
<keyword id="KW-0238">DNA-binding</keyword>
<keyword id="KW-0408">Iron</keyword>
<keyword id="KW-0411">Iron-sulfur</keyword>
<keyword id="KW-0479">Metal-binding</keyword>
<keyword id="KW-1185">Reference proteome</keyword>
<keyword id="KW-0804">Transcription</keyword>
<keyword id="KW-0805">Transcription regulation</keyword>
<reference key="1">
    <citation type="journal article" date="2004" name="J. Mol. Microbiol. Biotechnol.">
        <title>The complete genome sequence of Bacillus licheniformis DSM13, an organism with great industrial potential.</title>
        <authorList>
            <person name="Veith B."/>
            <person name="Herzberg C."/>
            <person name="Steckel S."/>
            <person name="Feesche J."/>
            <person name="Maurer K.H."/>
            <person name="Ehrenreich P."/>
            <person name="Baeumer S."/>
            <person name="Henne A."/>
            <person name="Liesegang H."/>
            <person name="Merkl R."/>
            <person name="Ehrenreich A."/>
            <person name="Gottschalk G."/>
        </authorList>
    </citation>
    <scope>NUCLEOTIDE SEQUENCE [LARGE SCALE GENOMIC DNA]</scope>
    <source>
        <strain>ATCC 14580 / DSM 13 / JCM 2505 / CCUG 7422 / NBRC 12200 / NCIMB 9375 / NCTC 10341 / NRRL NRS-1264 / Gibson 46</strain>
    </source>
</reference>
<reference key="2">
    <citation type="journal article" date="2004" name="Genome Biol.">
        <title>Complete genome sequence of the industrial bacterium Bacillus licheniformis and comparisons with closely related Bacillus species.</title>
        <authorList>
            <person name="Rey M.W."/>
            <person name="Ramaiya P."/>
            <person name="Nelson B.A."/>
            <person name="Brody-Karpin S.D."/>
            <person name="Zaretsky E.J."/>
            <person name="Tang M."/>
            <person name="Lopez de Leon A."/>
            <person name="Xiang H."/>
            <person name="Gusti V."/>
            <person name="Clausen I.G."/>
            <person name="Olsen P.B."/>
            <person name="Rasmussen M.D."/>
            <person name="Andersen J.T."/>
            <person name="Joergensen P.L."/>
            <person name="Larsen T.S."/>
            <person name="Sorokin A."/>
            <person name="Bolotin A."/>
            <person name="Lapidus A."/>
            <person name="Galleron N."/>
            <person name="Ehrlich S.D."/>
            <person name="Berka R.M."/>
        </authorList>
    </citation>
    <scope>NUCLEOTIDE SEQUENCE [LARGE SCALE GENOMIC DNA]</scope>
    <source>
        <strain>ATCC 14580 / DSM 13 / JCM 2505 / CCUG 7422 / NBRC 12200 / NCIMB 9375 / NCTC 10341 / NRRL NRS-1264 / Gibson 46</strain>
    </source>
</reference>
<name>NSRR_BACLD</name>
<gene>
    <name type="primary">nsrR</name>
    <name type="ordered locus">BLi01005</name>
    <name type="ordered locus">BL02858</name>
</gene>
<evidence type="ECO:0000250" key="1"/>
<evidence type="ECO:0000255" key="2">
    <source>
        <dbReference type="PROSITE-ProRule" id="PRU00540"/>
    </source>
</evidence>
<evidence type="ECO:0000305" key="3"/>
<sequence length="143" mass="16280">MKLTNYTDYSLRVLIFLATKNSNELVNIKDIADSYSISKNHLMKVIYELGKLGYVETIRGRNGGIRLGKAPELINIGEVIRHTEDDFNLVECFNGEKNHCILSPICGLKHVLNKALSAYLDVLDQYTLQDIIMNQDHIRKLLS</sequence>
<dbReference type="EMBL" id="AE017333">
    <property type="protein sequence ID" value="AAU39913.3"/>
    <property type="molecule type" value="Genomic_DNA"/>
</dbReference>
<dbReference type="EMBL" id="CP000002">
    <property type="protein sequence ID" value="AAU22570.1"/>
    <property type="molecule type" value="Genomic_DNA"/>
</dbReference>
<dbReference type="RefSeq" id="WP_003180105.1">
    <property type="nucleotide sequence ID" value="NC_006322.1"/>
</dbReference>
<dbReference type="SMR" id="Q65M01"/>
<dbReference type="STRING" id="279010.BL02858"/>
<dbReference type="GeneID" id="92862419"/>
<dbReference type="KEGG" id="bld:BLi01005"/>
<dbReference type="KEGG" id="bli:BL02858"/>
<dbReference type="eggNOG" id="COG1959">
    <property type="taxonomic scope" value="Bacteria"/>
</dbReference>
<dbReference type="HOGENOM" id="CLU_107144_2_1_9"/>
<dbReference type="Proteomes" id="UP000000606">
    <property type="component" value="Chromosome"/>
</dbReference>
<dbReference type="GO" id="GO:0005829">
    <property type="term" value="C:cytosol"/>
    <property type="evidence" value="ECO:0007669"/>
    <property type="project" value="TreeGrafter"/>
</dbReference>
<dbReference type="GO" id="GO:0051537">
    <property type="term" value="F:2 iron, 2 sulfur cluster binding"/>
    <property type="evidence" value="ECO:0007669"/>
    <property type="project" value="UniProtKB-KW"/>
</dbReference>
<dbReference type="GO" id="GO:0003677">
    <property type="term" value="F:DNA binding"/>
    <property type="evidence" value="ECO:0007669"/>
    <property type="project" value="UniProtKB-KW"/>
</dbReference>
<dbReference type="GO" id="GO:0003700">
    <property type="term" value="F:DNA-binding transcription factor activity"/>
    <property type="evidence" value="ECO:0007669"/>
    <property type="project" value="TreeGrafter"/>
</dbReference>
<dbReference type="GO" id="GO:0046872">
    <property type="term" value="F:metal ion binding"/>
    <property type="evidence" value="ECO:0007669"/>
    <property type="project" value="UniProtKB-KW"/>
</dbReference>
<dbReference type="Gene3D" id="1.10.10.10">
    <property type="entry name" value="Winged helix-like DNA-binding domain superfamily/Winged helix DNA-binding domain"/>
    <property type="match status" value="1"/>
</dbReference>
<dbReference type="InterPro" id="IPR030489">
    <property type="entry name" value="TR_Rrf2-type_CS"/>
</dbReference>
<dbReference type="InterPro" id="IPR000944">
    <property type="entry name" value="Tscrpt_reg_Rrf2"/>
</dbReference>
<dbReference type="InterPro" id="IPR036388">
    <property type="entry name" value="WH-like_DNA-bd_sf"/>
</dbReference>
<dbReference type="InterPro" id="IPR036390">
    <property type="entry name" value="WH_DNA-bd_sf"/>
</dbReference>
<dbReference type="NCBIfam" id="TIGR00738">
    <property type="entry name" value="rrf2_super"/>
    <property type="match status" value="1"/>
</dbReference>
<dbReference type="PANTHER" id="PTHR33221:SF4">
    <property type="entry name" value="HTH-TYPE TRANSCRIPTIONAL REPRESSOR NSRR"/>
    <property type="match status" value="1"/>
</dbReference>
<dbReference type="PANTHER" id="PTHR33221">
    <property type="entry name" value="WINGED HELIX-TURN-HELIX TRANSCRIPTIONAL REGULATOR, RRF2 FAMILY"/>
    <property type="match status" value="1"/>
</dbReference>
<dbReference type="Pfam" id="PF02082">
    <property type="entry name" value="Rrf2"/>
    <property type="match status" value="1"/>
</dbReference>
<dbReference type="SUPFAM" id="SSF46785">
    <property type="entry name" value="Winged helix' DNA-binding domain"/>
    <property type="match status" value="1"/>
</dbReference>
<dbReference type="PROSITE" id="PS01332">
    <property type="entry name" value="HTH_RRF2_1"/>
    <property type="match status" value="1"/>
</dbReference>
<dbReference type="PROSITE" id="PS51197">
    <property type="entry name" value="HTH_RRF2_2"/>
    <property type="match status" value="1"/>
</dbReference>
<accession>Q65M01</accession>
<accession>Q62XD8</accession>
<organism>
    <name type="scientific">Bacillus licheniformis (strain ATCC 14580 / DSM 13 / JCM 2505 / CCUG 7422 / NBRC 12200 / NCIMB 9375 / NCTC 10341 / NRRL NRS-1264 / Gibson 46)</name>
    <dbReference type="NCBI Taxonomy" id="279010"/>
    <lineage>
        <taxon>Bacteria</taxon>
        <taxon>Bacillati</taxon>
        <taxon>Bacillota</taxon>
        <taxon>Bacilli</taxon>
        <taxon>Bacillales</taxon>
        <taxon>Bacillaceae</taxon>
        <taxon>Bacillus</taxon>
    </lineage>
</organism>